<name>PUR9_PROM0</name>
<protein>
    <recommendedName>
        <fullName evidence="1">Bifunctional purine biosynthesis protein PurH</fullName>
    </recommendedName>
    <domain>
        <recommendedName>
            <fullName evidence="1">Phosphoribosylaminoimidazolecarboxamide formyltransferase</fullName>
            <ecNumber evidence="1">2.1.2.3</ecNumber>
        </recommendedName>
        <alternativeName>
            <fullName evidence="1">AICAR transformylase</fullName>
        </alternativeName>
    </domain>
    <domain>
        <recommendedName>
            <fullName evidence="1">IMP cyclohydrolase</fullName>
            <ecNumber evidence="1">3.5.4.10</ecNumber>
        </recommendedName>
        <alternativeName>
            <fullName evidence="1">ATIC</fullName>
        </alternativeName>
        <alternativeName>
            <fullName evidence="1">IMP synthase</fullName>
        </alternativeName>
        <alternativeName>
            <fullName evidence="1">Inosinicase</fullName>
        </alternativeName>
    </domain>
</protein>
<proteinExistence type="inferred from homology"/>
<keyword id="KW-0378">Hydrolase</keyword>
<keyword id="KW-0511">Multifunctional enzyme</keyword>
<keyword id="KW-0658">Purine biosynthesis</keyword>
<keyword id="KW-1185">Reference proteome</keyword>
<keyword id="KW-0808">Transferase</keyword>
<feature type="chain" id="PRO_1000018925" description="Bifunctional purine biosynthesis protein PurH">
    <location>
        <begin position="1"/>
        <end position="517"/>
    </location>
</feature>
<feature type="domain" description="MGS-like" evidence="2">
    <location>
        <begin position="1"/>
        <end position="145"/>
    </location>
</feature>
<sequence>MSPLALVSVSDKKNIIPFCKELIEQFNYKILSSGGTAKHLIDAKIPVIKVADFTNSPEILGGRVKTLHPKIHGGILAKRTDEEHKKDVETNNLELIDLVVVNLYPFKKTVDQGAQWEDAIENIDIGGPSMIRSAAKNHKDVSVLVDPSQYQNFLEESKKGELKDAYKAKLALEAFQHTADYDTAISNWIRKERDLQSSKYIESYPLIKTLRYGENPHQKAFWYGLSNIGWNSAEQLQGKDLSYNNLLDLESALSTVLEFGYTEKDELKTDMFASVILKHNNPCGASISNSASKAFLNALECDSVSAFGGIVAFNSNVDSDTAVHLKDIFLECVVAPSFDEEALEILKVKKNLRILKFSKDQLPKKNQNSTKSIMGGLLVQDTDDSQEKTEDWISVTNKNANNQANLDLNFAWKICKHVKSNAIVIAKDQKTIGIGAGQMNRVGAAKIALKAAGSLCSDAVLASDGFFPFADTVELAHEYGIKAIIQPGGSLRDQESIDMCNLKGISMIFTQKRHFLH</sequence>
<accession>A3PAY7</accession>
<gene>
    <name evidence="1" type="primary">purH</name>
    <name type="ordered locus">P9301_02891</name>
</gene>
<dbReference type="EC" id="2.1.2.3" evidence="1"/>
<dbReference type="EC" id="3.5.4.10" evidence="1"/>
<dbReference type="EMBL" id="CP000576">
    <property type="protein sequence ID" value="ABO16912.1"/>
    <property type="molecule type" value="Genomic_DNA"/>
</dbReference>
<dbReference type="RefSeq" id="WP_011862307.1">
    <property type="nucleotide sequence ID" value="NC_009091.1"/>
</dbReference>
<dbReference type="SMR" id="A3PAY7"/>
<dbReference type="STRING" id="167546.P9301_02891"/>
<dbReference type="KEGG" id="pmg:P9301_02891"/>
<dbReference type="eggNOG" id="COG0138">
    <property type="taxonomic scope" value="Bacteria"/>
</dbReference>
<dbReference type="HOGENOM" id="CLU_016316_5_2_3"/>
<dbReference type="OrthoDB" id="9802065at2"/>
<dbReference type="UniPathway" id="UPA00074">
    <property type="reaction ID" value="UER00133"/>
</dbReference>
<dbReference type="UniPathway" id="UPA00074">
    <property type="reaction ID" value="UER00135"/>
</dbReference>
<dbReference type="Proteomes" id="UP000001430">
    <property type="component" value="Chromosome"/>
</dbReference>
<dbReference type="GO" id="GO:0005829">
    <property type="term" value="C:cytosol"/>
    <property type="evidence" value="ECO:0007669"/>
    <property type="project" value="TreeGrafter"/>
</dbReference>
<dbReference type="GO" id="GO:0003937">
    <property type="term" value="F:IMP cyclohydrolase activity"/>
    <property type="evidence" value="ECO:0007669"/>
    <property type="project" value="UniProtKB-UniRule"/>
</dbReference>
<dbReference type="GO" id="GO:0004643">
    <property type="term" value="F:phosphoribosylaminoimidazolecarboxamide formyltransferase activity"/>
    <property type="evidence" value="ECO:0007669"/>
    <property type="project" value="UniProtKB-UniRule"/>
</dbReference>
<dbReference type="GO" id="GO:0006189">
    <property type="term" value="P:'de novo' IMP biosynthetic process"/>
    <property type="evidence" value="ECO:0007669"/>
    <property type="project" value="UniProtKB-UniRule"/>
</dbReference>
<dbReference type="CDD" id="cd01421">
    <property type="entry name" value="IMPCH"/>
    <property type="match status" value="1"/>
</dbReference>
<dbReference type="FunFam" id="3.40.140.20:FF:000001">
    <property type="entry name" value="Bifunctional purine biosynthesis protein PurH"/>
    <property type="match status" value="1"/>
</dbReference>
<dbReference type="FunFam" id="3.40.50.1380:FF:000001">
    <property type="entry name" value="Bifunctional purine biosynthesis protein PurH"/>
    <property type="match status" value="1"/>
</dbReference>
<dbReference type="Gene3D" id="3.40.140.20">
    <property type="match status" value="2"/>
</dbReference>
<dbReference type="Gene3D" id="3.40.50.1380">
    <property type="entry name" value="Methylglyoxal synthase-like domain"/>
    <property type="match status" value="1"/>
</dbReference>
<dbReference type="HAMAP" id="MF_00139">
    <property type="entry name" value="PurH"/>
    <property type="match status" value="1"/>
</dbReference>
<dbReference type="InterPro" id="IPR024051">
    <property type="entry name" value="AICAR_Tfase_dup_dom_sf"/>
</dbReference>
<dbReference type="InterPro" id="IPR016193">
    <property type="entry name" value="Cytidine_deaminase-like"/>
</dbReference>
<dbReference type="InterPro" id="IPR011607">
    <property type="entry name" value="MGS-like_dom"/>
</dbReference>
<dbReference type="InterPro" id="IPR036914">
    <property type="entry name" value="MGS-like_dom_sf"/>
</dbReference>
<dbReference type="InterPro" id="IPR002695">
    <property type="entry name" value="PurH-like"/>
</dbReference>
<dbReference type="NCBIfam" id="NF002049">
    <property type="entry name" value="PRK00881.1"/>
    <property type="match status" value="1"/>
</dbReference>
<dbReference type="NCBIfam" id="TIGR00355">
    <property type="entry name" value="purH"/>
    <property type="match status" value="1"/>
</dbReference>
<dbReference type="PANTHER" id="PTHR11692:SF0">
    <property type="entry name" value="BIFUNCTIONAL PURINE BIOSYNTHESIS PROTEIN ATIC"/>
    <property type="match status" value="1"/>
</dbReference>
<dbReference type="PANTHER" id="PTHR11692">
    <property type="entry name" value="BIFUNCTIONAL PURINE BIOSYNTHESIS PROTEIN PURH"/>
    <property type="match status" value="1"/>
</dbReference>
<dbReference type="Pfam" id="PF01808">
    <property type="entry name" value="AICARFT_IMPCHas"/>
    <property type="match status" value="1"/>
</dbReference>
<dbReference type="Pfam" id="PF02142">
    <property type="entry name" value="MGS"/>
    <property type="match status" value="1"/>
</dbReference>
<dbReference type="PIRSF" id="PIRSF000414">
    <property type="entry name" value="AICARFT_IMPCHas"/>
    <property type="match status" value="1"/>
</dbReference>
<dbReference type="SMART" id="SM00798">
    <property type="entry name" value="AICARFT_IMPCHas"/>
    <property type="match status" value="1"/>
</dbReference>
<dbReference type="SMART" id="SM00851">
    <property type="entry name" value="MGS"/>
    <property type="match status" value="1"/>
</dbReference>
<dbReference type="SUPFAM" id="SSF53927">
    <property type="entry name" value="Cytidine deaminase-like"/>
    <property type="match status" value="1"/>
</dbReference>
<dbReference type="SUPFAM" id="SSF52335">
    <property type="entry name" value="Methylglyoxal synthase-like"/>
    <property type="match status" value="1"/>
</dbReference>
<dbReference type="PROSITE" id="PS51855">
    <property type="entry name" value="MGS"/>
    <property type="match status" value="1"/>
</dbReference>
<comment type="catalytic activity">
    <reaction evidence="1">
        <text>(6R)-10-formyltetrahydrofolate + 5-amino-1-(5-phospho-beta-D-ribosyl)imidazole-4-carboxamide = 5-formamido-1-(5-phospho-D-ribosyl)imidazole-4-carboxamide + (6S)-5,6,7,8-tetrahydrofolate</text>
        <dbReference type="Rhea" id="RHEA:22192"/>
        <dbReference type="ChEBI" id="CHEBI:57453"/>
        <dbReference type="ChEBI" id="CHEBI:58467"/>
        <dbReference type="ChEBI" id="CHEBI:58475"/>
        <dbReference type="ChEBI" id="CHEBI:195366"/>
        <dbReference type="EC" id="2.1.2.3"/>
    </reaction>
</comment>
<comment type="catalytic activity">
    <reaction evidence="1">
        <text>IMP + H2O = 5-formamido-1-(5-phospho-D-ribosyl)imidazole-4-carboxamide</text>
        <dbReference type="Rhea" id="RHEA:18445"/>
        <dbReference type="ChEBI" id="CHEBI:15377"/>
        <dbReference type="ChEBI" id="CHEBI:58053"/>
        <dbReference type="ChEBI" id="CHEBI:58467"/>
        <dbReference type="EC" id="3.5.4.10"/>
    </reaction>
</comment>
<comment type="pathway">
    <text evidence="1">Purine metabolism; IMP biosynthesis via de novo pathway; 5-formamido-1-(5-phospho-D-ribosyl)imidazole-4-carboxamide from 5-amino-1-(5-phospho-D-ribosyl)imidazole-4-carboxamide (10-formyl THF route): step 1/1.</text>
</comment>
<comment type="pathway">
    <text evidence="1">Purine metabolism; IMP biosynthesis via de novo pathway; IMP from 5-formamido-1-(5-phospho-D-ribosyl)imidazole-4-carboxamide: step 1/1.</text>
</comment>
<comment type="domain">
    <text evidence="1">The IMP cyclohydrolase activity resides in the N-terminal region.</text>
</comment>
<comment type="similarity">
    <text evidence="1">Belongs to the PurH family.</text>
</comment>
<reference key="1">
    <citation type="journal article" date="2007" name="PLoS Genet.">
        <title>Patterns and implications of gene gain and loss in the evolution of Prochlorococcus.</title>
        <authorList>
            <person name="Kettler G.C."/>
            <person name="Martiny A.C."/>
            <person name="Huang K."/>
            <person name="Zucker J."/>
            <person name="Coleman M.L."/>
            <person name="Rodrigue S."/>
            <person name="Chen F."/>
            <person name="Lapidus A."/>
            <person name="Ferriera S."/>
            <person name="Johnson J."/>
            <person name="Steglich C."/>
            <person name="Church G.M."/>
            <person name="Richardson P."/>
            <person name="Chisholm S.W."/>
        </authorList>
    </citation>
    <scope>NUCLEOTIDE SEQUENCE [LARGE SCALE GENOMIC DNA]</scope>
    <source>
        <strain>MIT 9301</strain>
    </source>
</reference>
<evidence type="ECO:0000255" key="1">
    <source>
        <dbReference type="HAMAP-Rule" id="MF_00139"/>
    </source>
</evidence>
<evidence type="ECO:0000255" key="2">
    <source>
        <dbReference type="PROSITE-ProRule" id="PRU01202"/>
    </source>
</evidence>
<organism>
    <name type="scientific">Prochlorococcus marinus (strain MIT 9301)</name>
    <dbReference type="NCBI Taxonomy" id="167546"/>
    <lineage>
        <taxon>Bacteria</taxon>
        <taxon>Bacillati</taxon>
        <taxon>Cyanobacteriota</taxon>
        <taxon>Cyanophyceae</taxon>
        <taxon>Synechococcales</taxon>
        <taxon>Prochlorococcaceae</taxon>
        <taxon>Prochlorococcus</taxon>
    </lineage>
</organism>